<gene>
    <name evidence="1" type="primary">lipA</name>
    <name type="ordered locus">SO_1161</name>
</gene>
<accession>Q8EHQ6</accession>
<feature type="chain" id="PRO_0000102355" description="Lipoyl synthase">
    <location>
        <begin position="1"/>
        <end position="321"/>
    </location>
</feature>
<feature type="domain" description="Radical SAM core" evidence="2">
    <location>
        <begin position="80"/>
        <end position="297"/>
    </location>
</feature>
<feature type="binding site" evidence="1">
    <location>
        <position position="68"/>
    </location>
    <ligand>
        <name>[4Fe-4S] cluster</name>
        <dbReference type="ChEBI" id="CHEBI:49883"/>
        <label>1</label>
    </ligand>
</feature>
<feature type="binding site" evidence="1">
    <location>
        <position position="73"/>
    </location>
    <ligand>
        <name>[4Fe-4S] cluster</name>
        <dbReference type="ChEBI" id="CHEBI:49883"/>
        <label>1</label>
    </ligand>
</feature>
<feature type="binding site" evidence="1">
    <location>
        <position position="79"/>
    </location>
    <ligand>
        <name>[4Fe-4S] cluster</name>
        <dbReference type="ChEBI" id="CHEBI:49883"/>
        <label>1</label>
    </ligand>
</feature>
<feature type="binding site" evidence="1">
    <location>
        <position position="94"/>
    </location>
    <ligand>
        <name>[4Fe-4S] cluster</name>
        <dbReference type="ChEBI" id="CHEBI:49883"/>
        <label>2</label>
        <note>4Fe-4S-S-AdoMet</note>
    </ligand>
</feature>
<feature type="binding site" evidence="1">
    <location>
        <position position="98"/>
    </location>
    <ligand>
        <name>[4Fe-4S] cluster</name>
        <dbReference type="ChEBI" id="CHEBI:49883"/>
        <label>2</label>
        <note>4Fe-4S-S-AdoMet</note>
    </ligand>
</feature>
<feature type="binding site" evidence="1">
    <location>
        <position position="101"/>
    </location>
    <ligand>
        <name>[4Fe-4S] cluster</name>
        <dbReference type="ChEBI" id="CHEBI:49883"/>
        <label>2</label>
        <note>4Fe-4S-S-AdoMet</note>
    </ligand>
</feature>
<feature type="binding site" evidence="1">
    <location>
        <position position="308"/>
    </location>
    <ligand>
        <name>[4Fe-4S] cluster</name>
        <dbReference type="ChEBI" id="CHEBI:49883"/>
        <label>1</label>
    </ligand>
</feature>
<comment type="function">
    <text evidence="1">Catalyzes the radical-mediated insertion of two sulfur atoms into the C-6 and C-8 positions of the octanoyl moiety bound to the lipoyl domains of lipoate-dependent enzymes, thereby converting the octanoylated domains into lipoylated derivatives.</text>
</comment>
<comment type="catalytic activity">
    <reaction evidence="1">
        <text>[[Fe-S] cluster scaffold protein carrying a second [4Fe-4S](2+) cluster] + N(6)-octanoyl-L-lysyl-[protein] + 2 oxidized [2Fe-2S]-[ferredoxin] + 2 S-adenosyl-L-methionine + 4 H(+) = [[Fe-S] cluster scaffold protein] + N(6)-[(R)-dihydrolipoyl]-L-lysyl-[protein] + 4 Fe(3+) + 2 hydrogen sulfide + 2 5'-deoxyadenosine + 2 L-methionine + 2 reduced [2Fe-2S]-[ferredoxin]</text>
        <dbReference type="Rhea" id="RHEA:16585"/>
        <dbReference type="Rhea" id="RHEA-COMP:9928"/>
        <dbReference type="Rhea" id="RHEA-COMP:10000"/>
        <dbReference type="Rhea" id="RHEA-COMP:10001"/>
        <dbReference type="Rhea" id="RHEA-COMP:10475"/>
        <dbReference type="Rhea" id="RHEA-COMP:14568"/>
        <dbReference type="Rhea" id="RHEA-COMP:14569"/>
        <dbReference type="ChEBI" id="CHEBI:15378"/>
        <dbReference type="ChEBI" id="CHEBI:17319"/>
        <dbReference type="ChEBI" id="CHEBI:29034"/>
        <dbReference type="ChEBI" id="CHEBI:29919"/>
        <dbReference type="ChEBI" id="CHEBI:33722"/>
        <dbReference type="ChEBI" id="CHEBI:33737"/>
        <dbReference type="ChEBI" id="CHEBI:33738"/>
        <dbReference type="ChEBI" id="CHEBI:57844"/>
        <dbReference type="ChEBI" id="CHEBI:59789"/>
        <dbReference type="ChEBI" id="CHEBI:78809"/>
        <dbReference type="ChEBI" id="CHEBI:83100"/>
        <dbReference type="EC" id="2.8.1.8"/>
    </reaction>
</comment>
<comment type="cofactor">
    <cofactor evidence="1">
        <name>[4Fe-4S] cluster</name>
        <dbReference type="ChEBI" id="CHEBI:49883"/>
    </cofactor>
    <text evidence="1">Binds 2 [4Fe-4S] clusters per subunit. One cluster is coordinated with 3 cysteines and an exchangeable S-adenosyl-L-methionine.</text>
</comment>
<comment type="pathway">
    <text evidence="1">Protein modification; protein lipoylation via endogenous pathway; protein N(6)-(lipoyl)lysine from octanoyl-[acyl-carrier-protein]: step 2/2.</text>
</comment>
<comment type="subcellular location">
    <subcellularLocation>
        <location evidence="1">Cytoplasm</location>
    </subcellularLocation>
</comment>
<comment type="similarity">
    <text evidence="1">Belongs to the radical SAM superfamily. Lipoyl synthase family.</text>
</comment>
<evidence type="ECO:0000255" key="1">
    <source>
        <dbReference type="HAMAP-Rule" id="MF_00206"/>
    </source>
</evidence>
<evidence type="ECO:0000255" key="2">
    <source>
        <dbReference type="PROSITE-ProRule" id="PRU01266"/>
    </source>
</evidence>
<sequence length="321" mass="36464">MNRPERLQPGVKLRDAEKVSRIPVKIVPSERETMLRKPDWLRVKLPASNQRILDIKQALRANGLHSVCEEASCPNLAECFNHGTATFMILGAICTRRCPFCDVAHGRPLKPDEQEPVKLAQTIRDMKLKYVVITSVDRDDLRDGGAQHFADCIREIRKLNPEIKIEILVPDFRGRIDAALDILSTEPPDVFNHNLETAPMHYRKARPGANYQWSLDLLKRFKERHPNVPTKSGLMMGLGETNDEIAQVLRDLREHKVEMLTLGQYLQPSKFHLPVERYVSPAEFDELKALADELGFTHAACGPLVRSSYHADLQAQGKEVK</sequence>
<organism>
    <name type="scientific">Shewanella oneidensis (strain ATCC 700550 / JCM 31522 / CIP 106686 / LMG 19005 / NCIMB 14063 / MR-1)</name>
    <dbReference type="NCBI Taxonomy" id="211586"/>
    <lineage>
        <taxon>Bacteria</taxon>
        <taxon>Pseudomonadati</taxon>
        <taxon>Pseudomonadota</taxon>
        <taxon>Gammaproteobacteria</taxon>
        <taxon>Alteromonadales</taxon>
        <taxon>Shewanellaceae</taxon>
        <taxon>Shewanella</taxon>
    </lineage>
</organism>
<reference key="1">
    <citation type="journal article" date="2002" name="Nat. Biotechnol.">
        <title>Genome sequence of the dissimilatory metal ion-reducing bacterium Shewanella oneidensis.</title>
        <authorList>
            <person name="Heidelberg J.F."/>
            <person name="Paulsen I.T."/>
            <person name="Nelson K.E."/>
            <person name="Gaidos E.J."/>
            <person name="Nelson W.C."/>
            <person name="Read T.D."/>
            <person name="Eisen J.A."/>
            <person name="Seshadri R."/>
            <person name="Ward N.L."/>
            <person name="Methe B.A."/>
            <person name="Clayton R.A."/>
            <person name="Meyer T."/>
            <person name="Tsapin A."/>
            <person name="Scott J."/>
            <person name="Beanan M.J."/>
            <person name="Brinkac L.M."/>
            <person name="Daugherty S.C."/>
            <person name="DeBoy R.T."/>
            <person name="Dodson R.J."/>
            <person name="Durkin A.S."/>
            <person name="Haft D.H."/>
            <person name="Kolonay J.F."/>
            <person name="Madupu R."/>
            <person name="Peterson J.D."/>
            <person name="Umayam L.A."/>
            <person name="White O."/>
            <person name="Wolf A.M."/>
            <person name="Vamathevan J.J."/>
            <person name="Weidman J.F."/>
            <person name="Impraim M."/>
            <person name="Lee K."/>
            <person name="Berry K.J."/>
            <person name="Lee C."/>
            <person name="Mueller J."/>
            <person name="Khouri H.M."/>
            <person name="Gill J."/>
            <person name="Utterback T.R."/>
            <person name="McDonald L.A."/>
            <person name="Feldblyum T.V."/>
            <person name="Smith H.O."/>
            <person name="Venter J.C."/>
            <person name="Nealson K.H."/>
            <person name="Fraser C.M."/>
        </authorList>
    </citation>
    <scope>NUCLEOTIDE SEQUENCE [LARGE SCALE GENOMIC DNA]</scope>
    <source>
        <strain>ATCC 700550 / JCM 31522 / CIP 106686 / LMG 19005 / NCIMB 14063 / MR-1</strain>
    </source>
</reference>
<proteinExistence type="inferred from homology"/>
<keyword id="KW-0004">4Fe-4S</keyword>
<keyword id="KW-0963">Cytoplasm</keyword>
<keyword id="KW-0408">Iron</keyword>
<keyword id="KW-0411">Iron-sulfur</keyword>
<keyword id="KW-0479">Metal-binding</keyword>
<keyword id="KW-1185">Reference proteome</keyword>
<keyword id="KW-0949">S-adenosyl-L-methionine</keyword>
<keyword id="KW-0808">Transferase</keyword>
<protein>
    <recommendedName>
        <fullName evidence="1">Lipoyl synthase</fullName>
        <ecNumber evidence="1">2.8.1.8</ecNumber>
    </recommendedName>
    <alternativeName>
        <fullName evidence="1">Lip-syn</fullName>
        <shortName evidence="1">LS</shortName>
    </alternativeName>
    <alternativeName>
        <fullName evidence="1">Lipoate synthase</fullName>
    </alternativeName>
    <alternativeName>
        <fullName evidence="1">Lipoic acid synthase</fullName>
    </alternativeName>
    <alternativeName>
        <fullName evidence="1">Sulfur insertion protein LipA</fullName>
    </alternativeName>
</protein>
<name>LIPA_SHEON</name>
<dbReference type="EC" id="2.8.1.8" evidence="1"/>
<dbReference type="EMBL" id="AE014299">
    <property type="protein sequence ID" value="AAN54231.1"/>
    <property type="molecule type" value="Genomic_DNA"/>
</dbReference>
<dbReference type="RefSeq" id="NP_716786.1">
    <property type="nucleotide sequence ID" value="NC_004347.2"/>
</dbReference>
<dbReference type="RefSeq" id="WP_011071392.1">
    <property type="nucleotide sequence ID" value="NC_004347.2"/>
</dbReference>
<dbReference type="SMR" id="Q8EHQ6"/>
<dbReference type="STRING" id="211586.SO_1161"/>
<dbReference type="PaxDb" id="211586-SO_1161"/>
<dbReference type="KEGG" id="son:SO_1161"/>
<dbReference type="PATRIC" id="fig|211586.12.peg.1113"/>
<dbReference type="eggNOG" id="COG0320">
    <property type="taxonomic scope" value="Bacteria"/>
</dbReference>
<dbReference type="HOGENOM" id="CLU_033144_2_1_6"/>
<dbReference type="OrthoDB" id="9787898at2"/>
<dbReference type="PhylomeDB" id="Q8EHQ6"/>
<dbReference type="BioCyc" id="SONE211586:G1GMP-1065-MONOMER"/>
<dbReference type="UniPathway" id="UPA00538">
    <property type="reaction ID" value="UER00593"/>
</dbReference>
<dbReference type="Proteomes" id="UP000008186">
    <property type="component" value="Chromosome"/>
</dbReference>
<dbReference type="GO" id="GO:0005737">
    <property type="term" value="C:cytoplasm"/>
    <property type="evidence" value="ECO:0007669"/>
    <property type="project" value="UniProtKB-SubCell"/>
</dbReference>
<dbReference type="GO" id="GO:0051539">
    <property type="term" value="F:4 iron, 4 sulfur cluster binding"/>
    <property type="evidence" value="ECO:0007669"/>
    <property type="project" value="UniProtKB-UniRule"/>
</dbReference>
<dbReference type="GO" id="GO:0016992">
    <property type="term" value="F:lipoate synthase activity"/>
    <property type="evidence" value="ECO:0007669"/>
    <property type="project" value="UniProtKB-UniRule"/>
</dbReference>
<dbReference type="GO" id="GO:0046872">
    <property type="term" value="F:metal ion binding"/>
    <property type="evidence" value="ECO:0007669"/>
    <property type="project" value="UniProtKB-KW"/>
</dbReference>
<dbReference type="CDD" id="cd01335">
    <property type="entry name" value="Radical_SAM"/>
    <property type="match status" value="1"/>
</dbReference>
<dbReference type="FunFam" id="3.20.20.70:FF:000023">
    <property type="entry name" value="Lipoyl synthase"/>
    <property type="match status" value="1"/>
</dbReference>
<dbReference type="Gene3D" id="3.20.20.70">
    <property type="entry name" value="Aldolase class I"/>
    <property type="match status" value="1"/>
</dbReference>
<dbReference type="HAMAP" id="MF_00206">
    <property type="entry name" value="Lipoyl_synth"/>
    <property type="match status" value="1"/>
</dbReference>
<dbReference type="InterPro" id="IPR013785">
    <property type="entry name" value="Aldolase_TIM"/>
</dbReference>
<dbReference type="InterPro" id="IPR006638">
    <property type="entry name" value="Elp3/MiaA/NifB-like_rSAM"/>
</dbReference>
<dbReference type="InterPro" id="IPR003698">
    <property type="entry name" value="Lipoyl_synth"/>
</dbReference>
<dbReference type="InterPro" id="IPR007197">
    <property type="entry name" value="rSAM"/>
</dbReference>
<dbReference type="NCBIfam" id="TIGR00510">
    <property type="entry name" value="lipA"/>
    <property type="match status" value="1"/>
</dbReference>
<dbReference type="NCBIfam" id="NF004019">
    <property type="entry name" value="PRK05481.1"/>
    <property type="match status" value="1"/>
</dbReference>
<dbReference type="NCBIfam" id="NF009544">
    <property type="entry name" value="PRK12928.1"/>
    <property type="match status" value="1"/>
</dbReference>
<dbReference type="PANTHER" id="PTHR10949">
    <property type="entry name" value="LIPOYL SYNTHASE"/>
    <property type="match status" value="1"/>
</dbReference>
<dbReference type="PANTHER" id="PTHR10949:SF0">
    <property type="entry name" value="LIPOYL SYNTHASE, MITOCHONDRIAL"/>
    <property type="match status" value="1"/>
</dbReference>
<dbReference type="Pfam" id="PF04055">
    <property type="entry name" value="Radical_SAM"/>
    <property type="match status" value="1"/>
</dbReference>
<dbReference type="PIRSF" id="PIRSF005963">
    <property type="entry name" value="Lipoyl_synth"/>
    <property type="match status" value="1"/>
</dbReference>
<dbReference type="SFLD" id="SFLDF00271">
    <property type="entry name" value="lipoyl_synthase"/>
    <property type="match status" value="1"/>
</dbReference>
<dbReference type="SFLD" id="SFLDG01058">
    <property type="entry name" value="lipoyl_synthase_like"/>
    <property type="match status" value="1"/>
</dbReference>
<dbReference type="SMART" id="SM00729">
    <property type="entry name" value="Elp3"/>
    <property type="match status" value="1"/>
</dbReference>
<dbReference type="SUPFAM" id="SSF102114">
    <property type="entry name" value="Radical SAM enzymes"/>
    <property type="match status" value="1"/>
</dbReference>
<dbReference type="PROSITE" id="PS51918">
    <property type="entry name" value="RADICAL_SAM"/>
    <property type="match status" value="1"/>
</dbReference>